<accession>O34933</accession>
<accession>Q79ET2</accession>
<sequence>MYHSAKRRSSSRLMMFIIALIIFIFGLGLNLSVGASDISIIDSLKYLFVWDGSKEQLIISTLRLPRTLIGVFVGASLAVAGALMQAMTRNPLASPQIFGVNAGASLFVVASLVILPASPYSSVIFAFAGAAAGGAIVYMIASSGGMTPVKLALSGMAVHLFLSSMTQAIIILNESGEDVLYWMTGAIDGSNWQDVITIAPFSVIGIGLALVFSGSVSVLGLGDETAKGLGQNMNGIRILISLIILILSGASVAVAGPIGFVGLLVPHIVRKLIGEHYQYVLPFSALFGAILLVYADVLARWIAFPYESPVGIVTAIIGTPFFLYLARKGRNLK</sequence>
<name>YFMD_BACSU</name>
<evidence type="ECO:0000255" key="1"/>
<evidence type="ECO:0000305" key="2"/>
<evidence type="ECO:0000305" key="3">
    <source>
    </source>
</evidence>
<keyword id="KW-1003">Cell membrane</keyword>
<keyword id="KW-0406">Ion transport</keyword>
<keyword id="KW-0408">Iron</keyword>
<keyword id="KW-0410">Iron transport</keyword>
<keyword id="KW-0472">Membrane</keyword>
<keyword id="KW-1185">Reference proteome</keyword>
<keyword id="KW-0812">Transmembrane</keyword>
<keyword id="KW-1133">Transmembrane helix</keyword>
<keyword id="KW-0813">Transport</keyword>
<feature type="chain" id="PRO_0000361676" description="Fe(3+)-citrate import system permease protein YfmD">
    <location>
        <begin position="1"/>
        <end position="333"/>
    </location>
</feature>
<feature type="transmembrane region" description="Helical" evidence="1">
    <location>
        <begin position="13"/>
        <end position="33"/>
    </location>
</feature>
<feature type="transmembrane region" description="Helical" evidence="1">
    <location>
        <begin position="67"/>
        <end position="87"/>
    </location>
</feature>
<feature type="transmembrane region" description="Helical" evidence="1">
    <location>
        <begin position="97"/>
        <end position="117"/>
    </location>
</feature>
<feature type="transmembrane region" description="Helical" evidence="1">
    <location>
        <begin position="121"/>
        <end position="141"/>
    </location>
</feature>
<feature type="transmembrane region" description="Helical" evidence="1">
    <location>
        <begin position="151"/>
        <end position="171"/>
    </location>
</feature>
<feature type="transmembrane region" description="Helical" evidence="1">
    <location>
        <begin position="201"/>
        <end position="221"/>
    </location>
</feature>
<feature type="transmembrane region" description="Helical" evidence="1">
    <location>
        <begin position="238"/>
        <end position="258"/>
    </location>
</feature>
<feature type="transmembrane region" description="Helical" evidence="1">
    <location>
        <begin position="279"/>
        <end position="299"/>
    </location>
</feature>
<feature type="transmembrane region" description="Helical" evidence="1">
    <location>
        <begin position="302"/>
        <end position="322"/>
    </location>
</feature>
<dbReference type="EMBL" id="D86417">
    <property type="protein sequence ID" value="BAA22318.1"/>
    <property type="molecule type" value="Genomic_DNA"/>
</dbReference>
<dbReference type="EMBL" id="AL009126">
    <property type="protein sequence ID" value="CAB12580.1"/>
    <property type="molecule type" value="Genomic_DNA"/>
</dbReference>
<dbReference type="PIR" id="C69812">
    <property type="entry name" value="C69812"/>
</dbReference>
<dbReference type="SMR" id="O34933"/>
<dbReference type="FunCoup" id="O34933">
    <property type="interactions" value="232"/>
</dbReference>
<dbReference type="STRING" id="224308.BSU07510"/>
<dbReference type="PaxDb" id="224308-BSU07510"/>
<dbReference type="EnsemblBacteria" id="CAB12580">
    <property type="protein sequence ID" value="CAB12580"/>
    <property type="gene ID" value="BSU_07510"/>
</dbReference>
<dbReference type="GeneID" id="936110"/>
<dbReference type="KEGG" id="bsu:BSU07510"/>
<dbReference type="PATRIC" id="fig|224308.179.peg.817"/>
<dbReference type="eggNOG" id="COG0609">
    <property type="taxonomic scope" value="Bacteria"/>
</dbReference>
<dbReference type="InParanoid" id="O34933"/>
<dbReference type="OrthoDB" id="9811721at2"/>
<dbReference type="PhylomeDB" id="O34933"/>
<dbReference type="BioCyc" id="BSUB:BSU07510-MONOMER"/>
<dbReference type="Proteomes" id="UP000001570">
    <property type="component" value="Chromosome"/>
</dbReference>
<dbReference type="GO" id="GO:0005886">
    <property type="term" value="C:plasma membrane"/>
    <property type="evidence" value="ECO:0000318"/>
    <property type="project" value="GO_Central"/>
</dbReference>
<dbReference type="GO" id="GO:0022857">
    <property type="term" value="F:transmembrane transporter activity"/>
    <property type="evidence" value="ECO:0000318"/>
    <property type="project" value="GO_Central"/>
</dbReference>
<dbReference type="GO" id="GO:0033214">
    <property type="term" value="P:siderophore-dependent iron import into cell"/>
    <property type="evidence" value="ECO:0000318"/>
    <property type="project" value="GO_Central"/>
</dbReference>
<dbReference type="CDD" id="cd06550">
    <property type="entry name" value="TM_ABC_iron-siderophores_like"/>
    <property type="match status" value="1"/>
</dbReference>
<dbReference type="FunFam" id="1.10.3470.10:FF:000001">
    <property type="entry name" value="Vitamin B12 ABC transporter permease BtuC"/>
    <property type="match status" value="1"/>
</dbReference>
<dbReference type="Gene3D" id="1.10.3470.10">
    <property type="entry name" value="ABC transporter involved in vitamin B12 uptake, BtuC"/>
    <property type="match status" value="1"/>
</dbReference>
<dbReference type="InterPro" id="IPR037294">
    <property type="entry name" value="ABC_BtuC-like"/>
</dbReference>
<dbReference type="InterPro" id="IPR000522">
    <property type="entry name" value="ABC_transptr_permease_BtuC"/>
</dbReference>
<dbReference type="PANTHER" id="PTHR30472:SF1">
    <property type="entry name" value="FE(3+) DICITRATE TRANSPORT SYSTEM PERMEASE PROTEIN FECC-RELATED"/>
    <property type="match status" value="1"/>
</dbReference>
<dbReference type="PANTHER" id="PTHR30472">
    <property type="entry name" value="FERRIC ENTEROBACTIN TRANSPORT SYSTEM PERMEASE PROTEIN"/>
    <property type="match status" value="1"/>
</dbReference>
<dbReference type="Pfam" id="PF01032">
    <property type="entry name" value="FecCD"/>
    <property type="match status" value="1"/>
</dbReference>
<dbReference type="SUPFAM" id="SSF81345">
    <property type="entry name" value="ABC transporter involved in vitamin B12 uptake, BtuC"/>
    <property type="match status" value="1"/>
</dbReference>
<reference key="1">
    <citation type="journal article" date="1997" name="Gene">
        <title>Cloning and sequencing of a 35.7 kb in the 70 degree-73 degree region of the Bacillus subtilis genome reveal genes for a new two-component system, three spore germination proteins, an iron uptake system and a general stress response protein.</title>
        <authorList>
            <person name="Yamamoto H."/>
            <person name="Uchiyama S."/>
            <person name="Nugroho F.A."/>
            <person name="Sekiguchi J."/>
        </authorList>
    </citation>
    <scope>NUCLEOTIDE SEQUENCE [GENOMIC DNA]</scope>
    <source>
        <strain>168 / AC327</strain>
    </source>
</reference>
<reference key="2">
    <citation type="journal article" date="1997" name="Nature">
        <title>The complete genome sequence of the Gram-positive bacterium Bacillus subtilis.</title>
        <authorList>
            <person name="Kunst F."/>
            <person name="Ogasawara N."/>
            <person name="Moszer I."/>
            <person name="Albertini A.M."/>
            <person name="Alloni G."/>
            <person name="Azevedo V."/>
            <person name="Bertero M.G."/>
            <person name="Bessieres P."/>
            <person name="Bolotin A."/>
            <person name="Borchert S."/>
            <person name="Borriss R."/>
            <person name="Boursier L."/>
            <person name="Brans A."/>
            <person name="Braun M."/>
            <person name="Brignell S.C."/>
            <person name="Bron S."/>
            <person name="Brouillet S."/>
            <person name="Bruschi C.V."/>
            <person name="Caldwell B."/>
            <person name="Capuano V."/>
            <person name="Carter N.M."/>
            <person name="Choi S.-K."/>
            <person name="Codani J.-J."/>
            <person name="Connerton I.F."/>
            <person name="Cummings N.J."/>
            <person name="Daniel R.A."/>
            <person name="Denizot F."/>
            <person name="Devine K.M."/>
            <person name="Duesterhoeft A."/>
            <person name="Ehrlich S.D."/>
            <person name="Emmerson P.T."/>
            <person name="Entian K.-D."/>
            <person name="Errington J."/>
            <person name="Fabret C."/>
            <person name="Ferrari E."/>
            <person name="Foulger D."/>
            <person name="Fritz C."/>
            <person name="Fujita M."/>
            <person name="Fujita Y."/>
            <person name="Fuma S."/>
            <person name="Galizzi A."/>
            <person name="Galleron N."/>
            <person name="Ghim S.-Y."/>
            <person name="Glaser P."/>
            <person name="Goffeau A."/>
            <person name="Golightly E.J."/>
            <person name="Grandi G."/>
            <person name="Guiseppi G."/>
            <person name="Guy B.J."/>
            <person name="Haga K."/>
            <person name="Haiech J."/>
            <person name="Harwood C.R."/>
            <person name="Henaut A."/>
            <person name="Hilbert H."/>
            <person name="Holsappel S."/>
            <person name="Hosono S."/>
            <person name="Hullo M.-F."/>
            <person name="Itaya M."/>
            <person name="Jones L.-M."/>
            <person name="Joris B."/>
            <person name="Karamata D."/>
            <person name="Kasahara Y."/>
            <person name="Klaerr-Blanchard M."/>
            <person name="Klein C."/>
            <person name="Kobayashi Y."/>
            <person name="Koetter P."/>
            <person name="Koningstein G."/>
            <person name="Krogh S."/>
            <person name="Kumano M."/>
            <person name="Kurita K."/>
            <person name="Lapidus A."/>
            <person name="Lardinois S."/>
            <person name="Lauber J."/>
            <person name="Lazarevic V."/>
            <person name="Lee S.-M."/>
            <person name="Levine A."/>
            <person name="Liu H."/>
            <person name="Masuda S."/>
            <person name="Mauel C."/>
            <person name="Medigue C."/>
            <person name="Medina N."/>
            <person name="Mellado R.P."/>
            <person name="Mizuno M."/>
            <person name="Moestl D."/>
            <person name="Nakai S."/>
            <person name="Noback M."/>
            <person name="Noone D."/>
            <person name="O'Reilly M."/>
            <person name="Ogawa K."/>
            <person name="Ogiwara A."/>
            <person name="Oudega B."/>
            <person name="Park S.-H."/>
            <person name="Parro V."/>
            <person name="Pohl T.M."/>
            <person name="Portetelle D."/>
            <person name="Porwollik S."/>
            <person name="Prescott A.M."/>
            <person name="Presecan E."/>
            <person name="Pujic P."/>
            <person name="Purnelle B."/>
            <person name="Rapoport G."/>
            <person name="Rey M."/>
            <person name="Reynolds S."/>
            <person name="Rieger M."/>
            <person name="Rivolta C."/>
            <person name="Rocha E."/>
            <person name="Roche B."/>
            <person name="Rose M."/>
            <person name="Sadaie Y."/>
            <person name="Sato T."/>
            <person name="Scanlan E."/>
            <person name="Schleich S."/>
            <person name="Schroeter R."/>
            <person name="Scoffone F."/>
            <person name="Sekiguchi J."/>
            <person name="Sekowska A."/>
            <person name="Seror S.J."/>
            <person name="Serror P."/>
            <person name="Shin B.-S."/>
            <person name="Soldo B."/>
            <person name="Sorokin A."/>
            <person name="Tacconi E."/>
            <person name="Takagi T."/>
            <person name="Takahashi H."/>
            <person name="Takemaru K."/>
            <person name="Takeuchi M."/>
            <person name="Tamakoshi A."/>
            <person name="Tanaka T."/>
            <person name="Terpstra P."/>
            <person name="Tognoni A."/>
            <person name="Tosato V."/>
            <person name="Uchiyama S."/>
            <person name="Vandenbol M."/>
            <person name="Vannier F."/>
            <person name="Vassarotti A."/>
            <person name="Viari A."/>
            <person name="Wambutt R."/>
            <person name="Wedler E."/>
            <person name="Wedler H."/>
            <person name="Weitzenegger T."/>
            <person name="Winters P."/>
            <person name="Wipat A."/>
            <person name="Yamamoto H."/>
            <person name="Yamane K."/>
            <person name="Yasumoto K."/>
            <person name="Yata K."/>
            <person name="Yoshida K."/>
            <person name="Yoshikawa H.-F."/>
            <person name="Zumstein E."/>
            <person name="Yoshikawa H."/>
            <person name="Danchin A."/>
        </authorList>
    </citation>
    <scope>NUCLEOTIDE SEQUENCE [LARGE SCALE GENOMIC DNA]</scope>
    <source>
        <strain>168</strain>
    </source>
</reference>
<reference key="3">
    <citation type="journal article" date="2006" name="J. Bacteriol.">
        <title>Role of the Fur regulon in iron transport in Bacillus subtilis.</title>
        <authorList>
            <person name="Ollinger J."/>
            <person name="Song K.-B."/>
            <person name="Antelmann H."/>
            <person name="Hecker M."/>
            <person name="Helmann J.D."/>
        </authorList>
    </citation>
    <scope>FUNCTION</scope>
</reference>
<protein>
    <recommendedName>
        <fullName>Fe(3+)-citrate import system permease protein YfmD</fullName>
    </recommendedName>
    <alternativeName>
        <fullName>Ferric-citrate import system permease protein</fullName>
    </alternativeName>
</protein>
<proteinExistence type="inferred from homology"/>
<gene>
    <name type="primary">yfmD</name>
    <name type="ordered locus">BSU07510</name>
</gene>
<comment type="function">
    <text evidence="3">Part of the ABC transporter complex YfmCDEF involved in citrate-dependent Fe(3+) import. Involved in the translocation of the substrate across the membrane (Probable).</text>
</comment>
<comment type="subunit">
    <text evidence="2">The complex is composed of one ATP-binding protein (YfmF), two transmembrane proteins (YfmD and YfmE) and a solute-binding protein (YfmC).</text>
</comment>
<comment type="subcellular location">
    <subcellularLocation>
        <location evidence="2">Cell membrane</location>
        <topology evidence="2">Multi-pass membrane protein</topology>
    </subcellularLocation>
</comment>
<comment type="similarity">
    <text evidence="2">Belongs to the binding-protein-dependent transport system permease family. FecCD subfamily.</text>
</comment>
<organism>
    <name type="scientific">Bacillus subtilis (strain 168)</name>
    <dbReference type="NCBI Taxonomy" id="224308"/>
    <lineage>
        <taxon>Bacteria</taxon>
        <taxon>Bacillati</taxon>
        <taxon>Bacillota</taxon>
        <taxon>Bacilli</taxon>
        <taxon>Bacillales</taxon>
        <taxon>Bacillaceae</taxon>
        <taxon>Bacillus</taxon>
    </lineage>
</organism>